<dbReference type="EC" id="2.5.1.6" evidence="8"/>
<dbReference type="EMBL" id="M23368">
    <property type="protein sequence ID" value="AAA35017.1"/>
    <property type="molecule type" value="Genomic_DNA"/>
</dbReference>
<dbReference type="EMBL" id="U33057">
    <property type="protein sequence ID" value="AAB64944.1"/>
    <property type="molecule type" value="Genomic_DNA"/>
</dbReference>
<dbReference type="EMBL" id="AY693186">
    <property type="protein sequence ID" value="AAT93205.1"/>
    <property type="molecule type" value="Genomic_DNA"/>
</dbReference>
<dbReference type="EMBL" id="BK006938">
    <property type="protein sequence ID" value="DAA12334.1"/>
    <property type="molecule type" value="Genomic_DNA"/>
</dbReference>
<dbReference type="PIR" id="A31398">
    <property type="entry name" value="A31398"/>
</dbReference>
<dbReference type="RefSeq" id="NP_010790.3">
    <property type="nucleotide sequence ID" value="NM_001180810.3"/>
</dbReference>
<dbReference type="SMR" id="P19358"/>
<dbReference type="BioGRID" id="32553">
    <property type="interactions" value="122"/>
</dbReference>
<dbReference type="ComplexPortal" id="CPX-9181">
    <property type="entry name" value="SESAME metabolic enzyme complex"/>
</dbReference>
<dbReference type="DIP" id="DIP-4001N"/>
<dbReference type="FunCoup" id="P19358">
    <property type="interactions" value="1114"/>
</dbReference>
<dbReference type="IntAct" id="P19358">
    <property type="interactions" value="50"/>
</dbReference>
<dbReference type="MINT" id="P19358"/>
<dbReference type="STRING" id="4932.YDR502C"/>
<dbReference type="iPTMnet" id="P19358"/>
<dbReference type="PaxDb" id="4932-YDR502C"/>
<dbReference type="PeptideAtlas" id="P19358"/>
<dbReference type="EnsemblFungi" id="YDR502C_mRNA">
    <property type="protein sequence ID" value="YDR502C"/>
    <property type="gene ID" value="YDR502C"/>
</dbReference>
<dbReference type="GeneID" id="852113"/>
<dbReference type="KEGG" id="sce:YDR502C"/>
<dbReference type="AGR" id="SGD:S000002910"/>
<dbReference type="SGD" id="S000002910">
    <property type="gene designation" value="SAM2"/>
</dbReference>
<dbReference type="VEuPathDB" id="FungiDB:YDR502C"/>
<dbReference type="eggNOG" id="KOG1506">
    <property type="taxonomic scope" value="Eukaryota"/>
</dbReference>
<dbReference type="GeneTree" id="ENSGT00950000183185"/>
<dbReference type="HOGENOM" id="CLU_041802_0_1_1"/>
<dbReference type="InParanoid" id="P19358"/>
<dbReference type="OMA" id="ASYMARY"/>
<dbReference type="OrthoDB" id="5852090at2759"/>
<dbReference type="BioCyc" id="MetaCyc:MONOMER3O-1014"/>
<dbReference type="BioCyc" id="YEAST:MONOMER3O-1014"/>
<dbReference type="BRENDA" id="2.5.1.6">
    <property type="organism ID" value="984"/>
</dbReference>
<dbReference type="Reactome" id="R-SCE-156581">
    <property type="pathway name" value="Methylation"/>
</dbReference>
<dbReference type="Reactome" id="R-SCE-1614635">
    <property type="pathway name" value="Sulfur amino acid metabolism"/>
</dbReference>
<dbReference type="Reactome" id="R-SCE-2408508">
    <property type="pathway name" value="Metabolism of ingested SeMet, Sec, MeSec into H2Se"/>
</dbReference>
<dbReference type="UniPathway" id="UPA00315">
    <property type="reaction ID" value="UER00080"/>
</dbReference>
<dbReference type="BioGRID-ORCS" id="852113">
    <property type="hits" value="5 hits in 10 CRISPR screens"/>
</dbReference>
<dbReference type="CD-CODE" id="E03F929F">
    <property type="entry name" value="Stress granule"/>
</dbReference>
<dbReference type="PRO" id="PR:P19358"/>
<dbReference type="Proteomes" id="UP000002311">
    <property type="component" value="Chromosome IV"/>
</dbReference>
<dbReference type="RNAct" id="P19358">
    <property type="molecule type" value="protein"/>
</dbReference>
<dbReference type="GO" id="GO:0010494">
    <property type="term" value="C:cytoplasmic stress granule"/>
    <property type="evidence" value="ECO:0007005"/>
    <property type="project" value="SGD"/>
</dbReference>
<dbReference type="GO" id="GO:0005829">
    <property type="term" value="C:cytosol"/>
    <property type="evidence" value="ECO:0000318"/>
    <property type="project" value="GO_Central"/>
</dbReference>
<dbReference type="GO" id="GO:0005524">
    <property type="term" value="F:ATP binding"/>
    <property type="evidence" value="ECO:0007669"/>
    <property type="project" value="UniProtKB-KW"/>
</dbReference>
<dbReference type="GO" id="GO:0046872">
    <property type="term" value="F:metal ion binding"/>
    <property type="evidence" value="ECO:0007669"/>
    <property type="project" value="UniProtKB-KW"/>
</dbReference>
<dbReference type="GO" id="GO:0004478">
    <property type="term" value="F:methionine adenosyltransferase activity"/>
    <property type="evidence" value="ECO:0000314"/>
    <property type="project" value="SGD"/>
</dbReference>
<dbReference type="GO" id="GO:0006555">
    <property type="term" value="P:methionine metabolic process"/>
    <property type="evidence" value="ECO:0000315"/>
    <property type="project" value="SGD"/>
</dbReference>
<dbReference type="GO" id="GO:0006730">
    <property type="term" value="P:one-carbon metabolic process"/>
    <property type="evidence" value="ECO:0007669"/>
    <property type="project" value="UniProtKB-KW"/>
</dbReference>
<dbReference type="GO" id="GO:0006556">
    <property type="term" value="P:S-adenosylmethionine biosynthetic process"/>
    <property type="evidence" value="ECO:0000315"/>
    <property type="project" value="SGD"/>
</dbReference>
<dbReference type="CDD" id="cd18079">
    <property type="entry name" value="S-AdoMet_synt"/>
    <property type="match status" value="1"/>
</dbReference>
<dbReference type="FunFam" id="3.30.300.10:FF:000001">
    <property type="entry name" value="S-adenosylmethionine synthase"/>
    <property type="match status" value="1"/>
</dbReference>
<dbReference type="FunFam" id="3.30.300.10:FF:000003">
    <property type="entry name" value="S-adenosylmethionine synthase"/>
    <property type="match status" value="1"/>
</dbReference>
<dbReference type="FunFam" id="3.30.300.10:FF:000004">
    <property type="entry name" value="S-adenosylmethionine synthase"/>
    <property type="match status" value="1"/>
</dbReference>
<dbReference type="Gene3D" id="3.30.300.10">
    <property type="match status" value="3"/>
</dbReference>
<dbReference type="HAMAP" id="MF_00086">
    <property type="entry name" value="S_AdoMet_synth1"/>
    <property type="match status" value="1"/>
</dbReference>
<dbReference type="InterPro" id="IPR022631">
    <property type="entry name" value="ADOMET_SYNTHASE_CS"/>
</dbReference>
<dbReference type="InterPro" id="IPR022630">
    <property type="entry name" value="S-AdoMet_synt_C"/>
</dbReference>
<dbReference type="InterPro" id="IPR022629">
    <property type="entry name" value="S-AdoMet_synt_central"/>
</dbReference>
<dbReference type="InterPro" id="IPR022628">
    <property type="entry name" value="S-AdoMet_synt_N"/>
</dbReference>
<dbReference type="InterPro" id="IPR002133">
    <property type="entry name" value="S-AdoMet_synthetase"/>
</dbReference>
<dbReference type="InterPro" id="IPR022636">
    <property type="entry name" value="S-AdoMet_synthetase_sfam"/>
</dbReference>
<dbReference type="NCBIfam" id="TIGR01034">
    <property type="entry name" value="metK"/>
    <property type="match status" value="1"/>
</dbReference>
<dbReference type="PANTHER" id="PTHR11964">
    <property type="entry name" value="S-ADENOSYLMETHIONINE SYNTHETASE"/>
    <property type="match status" value="1"/>
</dbReference>
<dbReference type="Pfam" id="PF02773">
    <property type="entry name" value="S-AdoMet_synt_C"/>
    <property type="match status" value="1"/>
</dbReference>
<dbReference type="Pfam" id="PF02772">
    <property type="entry name" value="S-AdoMet_synt_M"/>
    <property type="match status" value="1"/>
</dbReference>
<dbReference type="Pfam" id="PF00438">
    <property type="entry name" value="S-AdoMet_synt_N"/>
    <property type="match status" value="1"/>
</dbReference>
<dbReference type="PIRSF" id="PIRSF000497">
    <property type="entry name" value="MAT"/>
    <property type="match status" value="1"/>
</dbReference>
<dbReference type="SUPFAM" id="SSF55973">
    <property type="entry name" value="S-adenosylmethionine synthetase"/>
    <property type="match status" value="3"/>
</dbReference>
<dbReference type="PROSITE" id="PS00376">
    <property type="entry name" value="ADOMET_SYNTHASE_1"/>
    <property type="match status" value="1"/>
</dbReference>
<dbReference type="PROSITE" id="PS00377">
    <property type="entry name" value="ADOMET_SYNTHASE_2"/>
    <property type="match status" value="1"/>
</dbReference>
<accession>P19358</accession>
<accession>D6VTC4</accession>
<accession>E9P927</accession>
<organism>
    <name type="scientific">Saccharomyces cerevisiae (strain ATCC 204508 / S288c)</name>
    <name type="common">Baker's yeast</name>
    <dbReference type="NCBI Taxonomy" id="559292"/>
    <lineage>
        <taxon>Eukaryota</taxon>
        <taxon>Fungi</taxon>
        <taxon>Dikarya</taxon>
        <taxon>Ascomycota</taxon>
        <taxon>Saccharomycotina</taxon>
        <taxon>Saccharomycetes</taxon>
        <taxon>Saccharomycetales</taxon>
        <taxon>Saccharomycetaceae</taxon>
        <taxon>Saccharomyces</taxon>
    </lineage>
</organism>
<comment type="function">
    <text evidence="8">Catalyzes the formation of S-adenosylmethionine from methionine and ATP. The reaction comprises two steps that are both catalyzed by the same enzyme: formation of S-adenosylmethionine (AdoMet) and triphosphate, and subsequent hydrolysis of the triphosphate.</text>
</comment>
<comment type="catalytic activity">
    <reaction evidence="8">
        <text>L-methionine + ATP + H2O = S-adenosyl-L-methionine + phosphate + diphosphate</text>
        <dbReference type="Rhea" id="RHEA:21080"/>
        <dbReference type="ChEBI" id="CHEBI:15377"/>
        <dbReference type="ChEBI" id="CHEBI:30616"/>
        <dbReference type="ChEBI" id="CHEBI:33019"/>
        <dbReference type="ChEBI" id="CHEBI:43474"/>
        <dbReference type="ChEBI" id="CHEBI:57844"/>
        <dbReference type="ChEBI" id="CHEBI:59789"/>
        <dbReference type="EC" id="2.5.1.6"/>
    </reaction>
</comment>
<comment type="cofactor">
    <cofactor evidence="2">
        <name>Mg(2+)</name>
        <dbReference type="ChEBI" id="CHEBI:18420"/>
    </cofactor>
    <text evidence="2">Binds 2 magnesium ions per subunit. The magnesium ions interact primarily with the substrate.</text>
</comment>
<comment type="cofactor">
    <cofactor evidence="2">
        <name>K(+)</name>
        <dbReference type="ChEBI" id="CHEBI:29103"/>
    </cofactor>
    <text evidence="2">Binds 1 potassium ion per subunit. The potassium ion interacts primarily with the substrate.</text>
</comment>
<comment type="pathway">
    <text evidence="5">Amino-acid biosynthesis; S-adenosyl-L-methionine biosynthesis; S-adenosyl-L-methionine from L-methionine: step 1/1.</text>
</comment>
<comment type="subunit">
    <text>Heterotetramer.</text>
</comment>
<comment type="interaction">
    <interactant intactId="EBI-10795">
        <id>P19358</id>
    </interactant>
    <interactant intactId="EBI-10789">
        <id>P10659</id>
        <label>SAM1</label>
    </interactant>
    <organismsDiffer>false</organismsDiffer>
    <experiments>5</experiments>
</comment>
<comment type="miscellaneous">
    <text>In yeast, there are two genes coding for AdoMet synthase.</text>
</comment>
<comment type="miscellaneous">
    <text evidence="4">Present with 22000 molecules/cell in log phase SD medium.</text>
</comment>
<comment type="similarity">
    <text evidence="7">Belongs to the AdoMet synthase family.</text>
</comment>
<name>METK2_YEAST</name>
<protein>
    <recommendedName>
        <fullName>S-adenosylmethionine synthase 2</fullName>
        <shortName>AdoMet synthase 2</shortName>
        <ecNumber evidence="8">2.5.1.6</ecNumber>
    </recommendedName>
    <alternativeName>
        <fullName>Methionine adenosyltransferase 2</fullName>
        <shortName>MAT 2</shortName>
    </alternativeName>
</protein>
<reference key="1">
    <citation type="journal article" date="1988" name="Mol. Cell. Biol.">
        <title>SAM2 encodes the second methionine S-adenosyl transferase in Saccharomyces cerevisiae: physiology and regulation of both enzymes.</title>
        <authorList>
            <person name="Thomas D."/>
            <person name="Rothstein R."/>
            <person name="Rosenberg N."/>
            <person name="Surdin-Kerjan Y."/>
        </authorList>
    </citation>
    <scope>NUCLEOTIDE SEQUENCE [GENOMIC DNA]</scope>
    <scope>FUNCTION</scope>
    <scope>CATALYTIC ACTIVITY</scope>
    <scope>PATHWAY</scope>
</reference>
<reference key="2">
    <citation type="journal article" date="1997" name="Nature">
        <title>The nucleotide sequence of Saccharomyces cerevisiae chromosome IV.</title>
        <authorList>
            <person name="Jacq C."/>
            <person name="Alt-Moerbe J."/>
            <person name="Andre B."/>
            <person name="Arnold W."/>
            <person name="Bahr A."/>
            <person name="Ballesta J.P.G."/>
            <person name="Bargues M."/>
            <person name="Baron L."/>
            <person name="Becker A."/>
            <person name="Biteau N."/>
            <person name="Bloecker H."/>
            <person name="Blugeon C."/>
            <person name="Boskovic J."/>
            <person name="Brandt P."/>
            <person name="Brueckner M."/>
            <person name="Buitrago M.J."/>
            <person name="Coster F."/>
            <person name="Delaveau T."/>
            <person name="del Rey F."/>
            <person name="Dujon B."/>
            <person name="Eide L.G."/>
            <person name="Garcia-Cantalejo J.M."/>
            <person name="Goffeau A."/>
            <person name="Gomez-Peris A."/>
            <person name="Granotier C."/>
            <person name="Hanemann V."/>
            <person name="Hankeln T."/>
            <person name="Hoheisel J.D."/>
            <person name="Jaeger W."/>
            <person name="Jimenez A."/>
            <person name="Jonniaux J.-L."/>
            <person name="Kraemer C."/>
            <person name="Kuester H."/>
            <person name="Laamanen P."/>
            <person name="Legros Y."/>
            <person name="Louis E.J."/>
            <person name="Moeller-Rieker S."/>
            <person name="Monnet A."/>
            <person name="Moro M."/>
            <person name="Mueller-Auer S."/>
            <person name="Nussbaumer B."/>
            <person name="Paricio N."/>
            <person name="Paulin L."/>
            <person name="Perea J."/>
            <person name="Perez-Alonso M."/>
            <person name="Perez-Ortin J.E."/>
            <person name="Pohl T.M."/>
            <person name="Prydz H."/>
            <person name="Purnelle B."/>
            <person name="Rasmussen S.W."/>
            <person name="Remacha M.A."/>
            <person name="Revuelta J.L."/>
            <person name="Rieger M."/>
            <person name="Salom D."/>
            <person name="Saluz H.P."/>
            <person name="Saiz J.E."/>
            <person name="Saren A.-M."/>
            <person name="Schaefer M."/>
            <person name="Scharfe M."/>
            <person name="Schmidt E.R."/>
            <person name="Schneider C."/>
            <person name="Scholler P."/>
            <person name="Schwarz S."/>
            <person name="Soler-Mira A."/>
            <person name="Urrestarazu L.A."/>
            <person name="Verhasselt P."/>
            <person name="Vissers S."/>
            <person name="Voet M."/>
            <person name="Volckaert G."/>
            <person name="Wagner G."/>
            <person name="Wambutt R."/>
            <person name="Wedler E."/>
            <person name="Wedler H."/>
            <person name="Woelfl S."/>
            <person name="Harris D.E."/>
            <person name="Bowman S."/>
            <person name="Brown D."/>
            <person name="Churcher C.M."/>
            <person name="Connor R."/>
            <person name="Dedman K."/>
            <person name="Gentles S."/>
            <person name="Hamlin N."/>
            <person name="Hunt S."/>
            <person name="Jones L."/>
            <person name="McDonald S."/>
            <person name="Murphy L.D."/>
            <person name="Niblett D."/>
            <person name="Odell C."/>
            <person name="Oliver K."/>
            <person name="Rajandream M.A."/>
            <person name="Richards C."/>
            <person name="Shore L."/>
            <person name="Walsh S.V."/>
            <person name="Barrell B.G."/>
            <person name="Dietrich F.S."/>
            <person name="Mulligan J.T."/>
            <person name="Allen E."/>
            <person name="Araujo R."/>
            <person name="Aviles E."/>
            <person name="Berno A."/>
            <person name="Carpenter J."/>
            <person name="Chen E."/>
            <person name="Cherry J.M."/>
            <person name="Chung E."/>
            <person name="Duncan M."/>
            <person name="Hunicke-Smith S."/>
            <person name="Hyman R.W."/>
            <person name="Komp C."/>
            <person name="Lashkari D."/>
            <person name="Lew H."/>
            <person name="Lin D."/>
            <person name="Mosedale D."/>
            <person name="Nakahara K."/>
            <person name="Namath A."/>
            <person name="Oefner P."/>
            <person name="Oh C."/>
            <person name="Petel F.X."/>
            <person name="Roberts D."/>
            <person name="Schramm S."/>
            <person name="Schroeder M."/>
            <person name="Shogren T."/>
            <person name="Shroff N."/>
            <person name="Winant A."/>
            <person name="Yelton M.A."/>
            <person name="Botstein D."/>
            <person name="Davis R.W."/>
            <person name="Johnston M."/>
            <person name="Andrews S."/>
            <person name="Brinkman R."/>
            <person name="Cooper J."/>
            <person name="Ding H."/>
            <person name="Du Z."/>
            <person name="Favello A."/>
            <person name="Fulton L."/>
            <person name="Gattung S."/>
            <person name="Greco T."/>
            <person name="Hallsworth K."/>
            <person name="Hawkins J."/>
            <person name="Hillier L.W."/>
            <person name="Jier M."/>
            <person name="Johnson D."/>
            <person name="Johnston L."/>
            <person name="Kirsten J."/>
            <person name="Kucaba T."/>
            <person name="Langston Y."/>
            <person name="Latreille P."/>
            <person name="Le T."/>
            <person name="Mardis E."/>
            <person name="Menezes S."/>
            <person name="Miller N."/>
            <person name="Nhan M."/>
            <person name="Pauley A."/>
            <person name="Peluso D."/>
            <person name="Rifkin L."/>
            <person name="Riles L."/>
            <person name="Taich A."/>
            <person name="Trevaskis E."/>
            <person name="Vignati D."/>
            <person name="Wilcox L."/>
            <person name="Wohldman P."/>
            <person name="Vaudin M."/>
            <person name="Wilson R."/>
            <person name="Waterston R."/>
            <person name="Albermann K."/>
            <person name="Hani J."/>
            <person name="Heumann K."/>
            <person name="Kleine K."/>
            <person name="Mewes H.-W."/>
            <person name="Zollner A."/>
            <person name="Zaccaria P."/>
        </authorList>
    </citation>
    <scope>NUCLEOTIDE SEQUENCE [LARGE SCALE GENOMIC DNA]</scope>
    <source>
        <strain>ATCC 204508 / S288c</strain>
    </source>
</reference>
<reference key="3">
    <citation type="journal article" date="2014" name="G3 (Bethesda)">
        <title>The reference genome sequence of Saccharomyces cerevisiae: Then and now.</title>
        <authorList>
            <person name="Engel S.R."/>
            <person name="Dietrich F.S."/>
            <person name="Fisk D.G."/>
            <person name="Binkley G."/>
            <person name="Balakrishnan R."/>
            <person name="Costanzo M.C."/>
            <person name="Dwight S.S."/>
            <person name="Hitz B.C."/>
            <person name="Karra K."/>
            <person name="Nash R.S."/>
            <person name="Weng S."/>
            <person name="Wong E.D."/>
            <person name="Lloyd P."/>
            <person name="Skrzypek M.S."/>
            <person name="Miyasato S.R."/>
            <person name="Simison M."/>
            <person name="Cherry J.M."/>
        </authorList>
    </citation>
    <scope>GENOME REANNOTATION</scope>
    <source>
        <strain>ATCC 204508 / S288c</strain>
    </source>
</reference>
<reference key="4">
    <citation type="journal article" date="2007" name="Genome Res.">
        <title>Approaching a complete repository of sequence-verified protein-encoding clones for Saccharomyces cerevisiae.</title>
        <authorList>
            <person name="Hu Y."/>
            <person name="Rolfs A."/>
            <person name="Bhullar B."/>
            <person name="Murthy T.V.S."/>
            <person name="Zhu C."/>
            <person name="Berger M.F."/>
            <person name="Camargo A.A."/>
            <person name="Kelley F."/>
            <person name="McCarron S."/>
            <person name="Jepson D."/>
            <person name="Richardson A."/>
            <person name="Raphael J."/>
            <person name="Moreira D."/>
            <person name="Taycher E."/>
            <person name="Zuo D."/>
            <person name="Mohr S."/>
            <person name="Kane M.F."/>
            <person name="Williamson J."/>
            <person name="Simpson A.J.G."/>
            <person name="Bulyk M.L."/>
            <person name="Harlow E."/>
            <person name="Marsischky G."/>
            <person name="Kolodner R.D."/>
            <person name="LaBaer J."/>
        </authorList>
    </citation>
    <scope>NUCLEOTIDE SEQUENCE [GENOMIC DNA]</scope>
    <source>
        <strain>ATCC 204508 / S288c</strain>
    </source>
</reference>
<reference key="5">
    <citation type="journal article" date="1997" name="Electrophoresis">
        <title>Proteome studies of Saccharomyces cerevisiae: identification and characterization of abundant proteins.</title>
        <authorList>
            <person name="Garrels J.I."/>
            <person name="McLaughlin C.S."/>
            <person name="Warner J.R."/>
            <person name="Futcher B."/>
            <person name="Latter G.I."/>
            <person name="Kobayashi R."/>
            <person name="Schwender B."/>
            <person name="Volpe T."/>
            <person name="Anderson D.S."/>
            <person name="Mesquita-Fuentes R."/>
            <person name="Payne W.E."/>
        </authorList>
    </citation>
    <scope>ACETYLATION AT SER-2</scope>
</reference>
<reference key="6">
    <citation type="journal article" date="2003" name="Nature">
        <title>Global analysis of protein expression in yeast.</title>
        <authorList>
            <person name="Ghaemmaghami S."/>
            <person name="Huh W.-K."/>
            <person name="Bower K."/>
            <person name="Howson R.W."/>
            <person name="Belle A."/>
            <person name="Dephoure N."/>
            <person name="O'Shea E.K."/>
            <person name="Weissman J.S."/>
        </authorList>
    </citation>
    <scope>LEVEL OF PROTEIN EXPRESSION [LARGE SCALE ANALYSIS]</scope>
</reference>
<gene>
    <name type="primary">SAM2</name>
    <name type="synonym">ETH2</name>
    <name type="ordered locus">YDR502C</name>
    <name type="ORF">D9719.8</name>
</gene>
<sequence length="384" mass="42256">MSKSKTFLFTSESVGEGHPDKICDQVSDAILDACLEQDPFSKVACETAAKTGMIMVFGEITTKARLDYQQIVRDTIKKIGYDDSAKGFDYKTCNVLVAIEQQSPDIAQGLHYEKSLEDLGAGDQGIMFGYATDETPEGLPLTILLAHKLNMAMADARRDGSLPWLRPDTKTQVTVEYEDDNGRWVPKRIDTVVISAQHADEISTADLRTQLQKDIVEKVIPKDMLDENTKYFIQPSGRFVIGGPQGDAGLTGRKIIVDAYGGASSVGGGAFSGKDYSKVDRSAAYAARWVAKSLVAAGLCKRVQVQFSYAIGIAEPLSLHVDTYGTATKSDDEIIEIIKKNFDLRPGVLVKELDLARPIYLPTASYGHFTNQEYSWEKPKKLEF</sequence>
<evidence type="ECO:0000250" key="1">
    <source>
        <dbReference type="UniProtKB" id="P0A817"/>
    </source>
</evidence>
<evidence type="ECO:0000250" key="2">
    <source>
        <dbReference type="UniProtKB" id="P13444"/>
    </source>
</evidence>
<evidence type="ECO:0000250" key="3">
    <source>
        <dbReference type="UniProtKB" id="Q00266"/>
    </source>
</evidence>
<evidence type="ECO:0000269" key="4">
    <source>
    </source>
</evidence>
<evidence type="ECO:0000269" key="5">
    <source>
    </source>
</evidence>
<evidence type="ECO:0000269" key="6">
    <source>
    </source>
</evidence>
<evidence type="ECO:0000305" key="7"/>
<evidence type="ECO:0000305" key="8">
    <source>
    </source>
</evidence>
<feature type="initiator methionine" description="Removed" evidence="6">
    <location>
        <position position="1"/>
    </location>
</feature>
<feature type="chain" id="PRO_0000174452" description="S-adenosylmethionine synthase 2">
    <location>
        <begin position="2"/>
        <end position="384"/>
    </location>
</feature>
<feature type="binding site" evidence="2">
    <location>
        <position position="12"/>
    </location>
    <ligand>
        <name>Mg(2+)</name>
        <dbReference type="ChEBI" id="CHEBI:18420"/>
    </ligand>
</feature>
<feature type="binding site" description="in other chain" evidence="3">
    <location>
        <position position="18"/>
    </location>
    <ligand>
        <name>ATP</name>
        <dbReference type="ChEBI" id="CHEBI:30616"/>
        <note>ligand shared between two neighboring subunits</note>
    </ligand>
</feature>
<feature type="binding site" evidence="1">
    <location>
        <position position="46"/>
    </location>
    <ligand>
        <name>K(+)</name>
        <dbReference type="ChEBI" id="CHEBI:29103"/>
    </ligand>
</feature>
<feature type="binding site" description="in other chain" evidence="1">
    <location>
        <position position="59"/>
    </location>
    <ligand>
        <name>L-methionine</name>
        <dbReference type="ChEBI" id="CHEBI:57844"/>
        <note>ligand shared between two neighboring subunits</note>
    </ligand>
</feature>
<feature type="binding site" description="in other chain" evidence="1">
    <location>
        <position position="102"/>
    </location>
    <ligand>
        <name>L-methionine</name>
        <dbReference type="ChEBI" id="CHEBI:57844"/>
        <note>ligand shared between two neighboring subunits</note>
    </ligand>
</feature>
<feature type="binding site" description="in other chain" evidence="3">
    <location>
        <begin position="168"/>
        <end position="170"/>
    </location>
    <ligand>
        <name>ATP</name>
        <dbReference type="ChEBI" id="CHEBI:30616"/>
        <note>ligand shared between two neighboring subunits</note>
    </ligand>
</feature>
<feature type="binding site" description="in other chain" evidence="3">
    <location>
        <begin position="236"/>
        <end position="239"/>
    </location>
    <ligand>
        <name>ATP</name>
        <dbReference type="ChEBI" id="CHEBI:30616"/>
        <note>ligand shared between two neighboring subunits</note>
    </ligand>
</feature>
<feature type="binding site" description="in other chain" evidence="3">
    <location>
        <position position="247"/>
    </location>
    <ligand>
        <name>ATP</name>
        <dbReference type="ChEBI" id="CHEBI:30616"/>
        <note>ligand shared between two neighboring subunits</note>
    </ligand>
</feature>
<feature type="binding site" evidence="1">
    <location>
        <position position="247"/>
    </location>
    <ligand>
        <name>L-methionine</name>
        <dbReference type="ChEBI" id="CHEBI:57844"/>
        <note>ligand shared between two neighboring subunits</note>
    </ligand>
</feature>
<feature type="binding site" description="in other chain" evidence="1">
    <location>
        <begin position="253"/>
        <end position="254"/>
    </location>
    <ligand>
        <name>ATP</name>
        <dbReference type="ChEBI" id="CHEBI:30616"/>
        <note>ligand shared between two neighboring subunits</note>
    </ligand>
</feature>
<feature type="binding site" evidence="1">
    <location>
        <position position="270"/>
    </location>
    <ligand>
        <name>ATP</name>
        <dbReference type="ChEBI" id="CHEBI:30616"/>
        <note>ligand shared between two neighboring subunits</note>
    </ligand>
</feature>
<feature type="binding site" evidence="1">
    <location>
        <position position="274"/>
    </location>
    <ligand>
        <name>ATP</name>
        <dbReference type="ChEBI" id="CHEBI:30616"/>
        <note>ligand shared between two neighboring subunits</note>
    </ligand>
</feature>
<feature type="binding site" evidence="2">
    <location>
        <position position="278"/>
    </location>
    <ligand>
        <name>ATP</name>
        <dbReference type="ChEBI" id="CHEBI:30616"/>
        <note>ligand shared between two neighboring subunits</note>
    </ligand>
</feature>
<feature type="binding site" description="in other chain" evidence="1">
    <location>
        <position position="278"/>
    </location>
    <ligand>
        <name>L-methionine</name>
        <dbReference type="ChEBI" id="CHEBI:57844"/>
        <note>ligand shared between two neighboring subunits</note>
    </ligand>
</feature>
<feature type="modified residue" description="N-acetylserine" evidence="6">
    <location>
        <position position="2"/>
    </location>
</feature>
<feature type="sequence conflict" description="In Ref. 4; AAT93205." evidence="7" ref="4">
    <original>Y</original>
    <variation>H</variation>
    <location>
        <position position="130"/>
    </location>
</feature>
<proteinExistence type="evidence at protein level"/>
<keyword id="KW-0007">Acetylation</keyword>
<keyword id="KW-0067">ATP-binding</keyword>
<keyword id="KW-0460">Magnesium</keyword>
<keyword id="KW-0479">Metal-binding</keyword>
<keyword id="KW-0547">Nucleotide-binding</keyword>
<keyword id="KW-0554">One-carbon metabolism</keyword>
<keyword id="KW-0630">Potassium</keyword>
<keyword id="KW-1185">Reference proteome</keyword>
<keyword id="KW-0808">Transferase</keyword>